<accession>Q9W1X8</accession>
<accession>Q1H8X1</accession>
<accession>Q8MS16</accession>
<name>FCL_DROME</name>
<keyword id="KW-0413">Isomerase</keyword>
<keyword id="KW-0511">Multifunctional enzyme</keyword>
<keyword id="KW-0521">NADP</keyword>
<keyword id="KW-0560">Oxidoreductase</keyword>
<keyword id="KW-1185">Reference proteome</keyword>
<reference key="1">
    <citation type="journal article" date="2006" name="FEBS J.">
        <title>Reconstitution in vitro of the GDP-fucose biosynthetic pathways of Caenorhabditis elegans and Drosophila melanogaster.</title>
        <authorList>
            <person name="Rhomberg S."/>
            <person name="Fuchsluger C."/>
            <person name="Rendic D."/>
            <person name="Paschinger K."/>
            <person name="Jantsch V."/>
            <person name="Kosma P."/>
            <person name="Wilson I.B.H."/>
        </authorList>
    </citation>
    <scope>NUCLEOTIDE SEQUENCE [MRNA]</scope>
    <scope>FUNCTION</scope>
    <scope>CATALYTIC ACTIVITY</scope>
</reference>
<reference evidence="6" key="2">
    <citation type="journal article" date="2000" name="Science">
        <title>The genome sequence of Drosophila melanogaster.</title>
        <authorList>
            <person name="Adams M.D."/>
            <person name="Celniker S.E."/>
            <person name="Holt R.A."/>
            <person name="Evans C.A."/>
            <person name="Gocayne J.D."/>
            <person name="Amanatides P.G."/>
            <person name="Scherer S.E."/>
            <person name="Li P.W."/>
            <person name="Hoskins R.A."/>
            <person name="Galle R.F."/>
            <person name="George R.A."/>
            <person name="Lewis S.E."/>
            <person name="Richards S."/>
            <person name="Ashburner M."/>
            <person name="Henderson S.N."/>
            <person name="Sutton G.G."/>
            <person name="Wortman J.R."/>
            <person name="Yandell M.D."/>
            <person name="Zhang Q."/>
            <person name="Chen L.X."/>
            <person name="Brandon R.C."/>
            <person name="Rogers Y.-H.C."/>
            <person name="Blazej R.G."/>
            <person name="Champe M."/>
            <person name="Pfeiffer B.D."/>
            <person name="Wan K.H."/>
            <person name="Doyle C."/>
            <person name="Baxter E.G."/>
            <person name="Helt G."/>
            <person name="Nelson C.R."/>
            <person name="Miklos G.L.G."/>
            <person name="Abril J.F."/>
            <person name="Agbayani A."/>
            <person name="An H.-J."/>
            <person name="Andrews-Pfannkoch C."/>
            <person name="Baldwin D."/>
            <person name="Ballew R.M."/>
            <person name="Basu A."/>
            <person name="Baxendale J."/>
            <person name="Bayraktaroglu L."/>
            <person name="Beasley E.M."/>
            <person name="Beeson K.Y."/>
            <person name="Benos P.V."/>
            <person name="Berman B.P."/>
            <person name="Bhandari D."/>
            <person name="Bolshakov S."/>
            <person name="Borkova D."/>
            <person name="Botchan M.R."/>
            <person name="Bouck J."/>
            <person name="Brokstein P."/>
            <person name="Brottier P."/>
            <person name="Burtis K.C."/>
            <person name="Busam D.A."/>
            <person name="Butler H."/>
            <person name="Cadieu E."/>
            <person name="Center A."/>
            <person name="Chandra I."/>
            <person name="Cherry J.M."/>
            <person name="Cawley S."/>
            <person name="Dahlke C."/>
            <person name="Davenport L.B."/>
            <person name="Davies P."/>
            <person name="de Pablos B."/>
            <person name="Delcher A."/>
            <person name="Deng Z."/>
            <person name="Mays A.D."/>
            <person name="Dew I."/>
            <person name="Dietz S.M."/>
            <person name="Dodson K."/>
            <person name="Doup L.E."/>
            <person name="Downes M."/>
            <person name="Dugan-Rocha S."/>
            <person name="Dunkov B.C."/>
            <person name="Dunn P."/>
            <person name="Durbin K.J."/>
            <person name="Evangelista C.C."/>
            <person name="Ferraz C."/>
            <person name="Ferriera S."/>
            <person name="Fleischmann W."/>
            <person name="Fosler C."/>
            <person name="Gabrielian A.E."/>
            <person name="Garg N.S."/>
            <person name="Gelbart W.M."/>
            <person name="Glasser K."/>
            <person name="Glodek A."/>
            <person name="Gong F."/>
            <person name="Gorrell J.H."/>
            <person name="Gu Z."/>
            <person name="Guan P."/>
            <person name="Harris M."/>
            <person name="Harris N.L."/>
            <person name="Harvey D.A."/>
            <person name="Heiman T.J."/>
            <person name="Hernandez J.R."/>
            <person name="Houck J."/>
            <person name="Hostin D."/>
            <person name="Houston K.A."/>
            <person name="Howland T.J."/>
            <person name="Wei M.-H."/>
            <person name="Ibegwam C."/>
            <person name="Jalali M."/>
            <person name="Kalush F."/>
            <person name="Karpen G.H."/>
            <person name="Ke Z."/>
            <person name="Kennison J.A."/>
            <person name="Ketchum K.A."/>
            <person name="Kimmel B.E."/>
            <person name="Kodira C.D."/>
            <person name="Kraft C.L."/>
            <person name="Kravitz S."/>
            <person name="Kulp D."/>
            <person name="Lai Z."/>
            <person name="Lasko P."/>
            <person name="Lei Y."/>
            <person name="Levitsky A.A."/>
            <person name="Li J.H."/>
            <person name="Li Z."/>
            <person name="Liang Y."/>
            <person name="Lin X."/>
            <person name="Liu X."/>
            <person name="Mattei B."/>
            <person name="McIntosh T.C."/>
            <person name="McLeod M.P."/>
            <person name="McPherson D."/>
            <person name="Merkulov G."/>
            <person name="Milshina N.V."/>
            <person name="Mobarry C."/>
            <person name="Morris J."/>
            <person name="Moshrefi A."/>
            <person name="Mount S.M."/>
            <person name="Moy M."/>
            <person name="Murphy B."/>
            <person name="Murphy L."/>
            <person name="Muzny D.M."/>
            <person name="Nelson D.L."/>
            <person name="Nelson D.R."/>
            <person name="Nelson K.A."/>
            <person name="Nixon K."/>
            <person name="Nusskern D.R."/>
            <person name="Pacleb J.M."/>
            <person name="Palazzolo M."/>
            <person name="Pittman G.S."/>
            <person name="Pan S."/>
            <person name="Pollard J."/>
            <person name="Puri V."/>
            <person name="Reese M.G."/>
            <person name="Reinert K."/>
            <person name="Remington K."/>
            <person name="Saunders R.D.C."/>
            <person name="Scheeler F."/>
            <person name="Shen H."/>
            <person name="Shue B.C."/>
            <person name="Siden-Kiamos I."/>
            <person name="Simpson M."/>
            <person name="Skupski M.P."/>
            <person name="Smith T.J."/>
            <person name="Spier E."/>
            <person name="Spradling A.C."/>
            <person name="Stapleton M."/>
            <person name="Strong R."/>
            <person name="Sun E."/>
            <person name="Svirskas R."/>
            <person name="Tector C."/>
            <person name="Turner R."/>
            <person name="Venter E."/>
            <person name="Wang A.H."/>
            <person name="Wang X."/>
            <person name="Wang Z.-Y."/>
            <person name="Wassarman D.A."/>
            <person name="Weinstock G.M."/>
            <person name="Weissenbach J."/>
            <person name="Williams S.M."/>
            <person name="Woodage T."/>
            <person name="Worley K.C."/>
            <person name="Wu D."/>
            <person name="Yang S."/>
            <person name="Yao Q.A."/>
            <person name="Ye J."/>
            <person name="Yeh R.-F."/>
            <person name="Zaveri J.S."/>
            <person name="Zhan M."/>
            <person name="Zhang G."/>
            <person name="Zhao Q."/>
            <person name="Zheng L."/>
            <person name="Zheng X.H."/>
            <person name="Zhong F.N."/>
            <person name="Zhong W."/>
            <person name="Zhou X."/>
            <person name="Zhu S.C."/>
            <person name="Zhu X."/>
            <person name="Smith H.O."/>
            <person name="Gibbs R.A."/>
            <person name="Myers E.W."/>
            <person name="Rubin G.M."/>
            <person name="Venter J.C."/>
        </authorList>
    </citation>
    <scope>NUCLEOTIDE SEQUENCE [LARGE SCALE GENOMIC DNA]</scope>
    <source>
        <strain evidence="3">Berkeley</strain>
    </source>
</reference>
<reference key="3">
    <citation type="journal article" date="2002" name="Genome Biol.">
        <title>Annotation of the Drosophila melanogaster euchromatic genome: a systematic review.</title>
        <authorList>
            <person name="Misra S."/>
            <person name="Crosby M.A."/>
            <person name="Mungall C.J."/>
            <person name="Matthews B.B."/>
            <person name="Campbell K.S."/>
            <person name="Hradecky P."/>
            <person name="Huang Y."/>
            <person name="Kaminker J.S."/>
            <person name="Millburn G.H."/>
            <person name="Prochnik S.E."/>
            <person name="Smith C.D."/>
            <person name="Tupy J.L."/>
            <person name="Whitfield E.J."/>
            <person name="Bayraktaroglu L."/>
            <person name="Berman B.P."/>
            <person name="Bettencourt B.R."/>
            <person name="Celniker S.E."/>
            <person name="de Grey A.D.N.J."/>
            <person name="Drysdale R.A."/>
            <person name="Harris N.L."/>
            <person name="Richter J."/>
            <person name="Russo S."/>
            <person name="Schroeder A.J."/>
            <person name="Shu S.Q."/>
            <person name="Stapleton M."/>
            <person name="Yamada C."/>
            <person name="Ashburner M."/>
            <person name="Gelbart W.M."/>
            <person name="Rubin G.M."/>
            <person name="Lewis S.E."/>
        </authorList>
    </citation>
    <scope>GENOME REANNOTATION</scope>
    <source>
        <strain>Berkeley</strain>
    </source>
</reference>
<reference evidence="6" key="4">
    <citation type="journal article" date="2002" name="Genome Biol.">
        <title>A Drosophila full-length cDNA resource.</title>
        <authorList>
            <person name="Stapleton M."/>
            <person name="Carlson J.W."/>
            <person name="Brokstein P."/>
            <person name="Yu C."/>
            <person name="Champe M."/>
            <person name="George R.A."/>
            <person name="Guarin H."/>
            <person name="Kronmiller B."/>
            <person name="Pacleb J.M."/>
            <person name="Park S."/>
            <person name="Wan K.H."/>
            <person name="Rubin G.M."/>
            <person name="Celniker S.E."/>
        </authorList>
    </citation>
    <scope>NUCLEOTIDE SEQUENCE [LARGE SCALE MRNA]</scope>
    <source>
        <strain evidence="4">Berkeley</strain>
        <tissue evidence="4">Embryo</tissue>
        <tissue evidence="4">Ovary</tissue>
    </source>
</reference>
<reference evidence="6" key="5">
    <citation type="journal article" date="2002" name="J. Biol. Chem.">
        <title>Composition of Drosophila melanogaster proteome involved in fucosylated glycan metabolism.</title>
        <authorList>
            <person name="Roos C."/>
            <person name="Kolmer M."/>
            <person name="Mattila P."/>
            <person name="Renkonen R."/>
        </authorList>
    </citation>
    <scope>HOMOLOGY</scope>
</reference>
<gene>
    <name type="primary">Gmer</name>
    <name type="ORF">CG3495</name>
</gene>
<organism evidence="8">
    <name type="scientific">Drosophila melanogaster</name>
    <name type="common">Fruit fly</name>
    <dbReference type="NCBI Taxonomy" id="7227"/>
    <lineage>
        <taxon>Eukaryota</taxon>
        <taxon>Metazoa</taxon>
        <taxon>Ecdysozoa</taxon>
        <taxon>Arthropoda</taxon>
        <taxon>Hexapoda</taxon>
        <taxon>Insecta</taxon>
        <taxon>Pterygota</taxon>
        <taxon>Neoptera</taxon>
        <taxon>Endopterygota</taxon>
        <taxon>Diptera</taxon>
        <taxon>Brachycera</taxon>
        <taxon>Muscomorpha</taxon>
        <taxon>Ephydroidea</taxon>
        <taxon>Drosophilidae</taxon>
        <taxon>Drosophila</taxon>
        <taxon>Sophophora</taxon>
    </lineage>
</organism>
<evidence type="ECO:0000250" key="1"/>
<evidence type="ECO:0000250" key="2">
    <source>
        <dbReference type="UniProtKB" id="Q13630"/>
    </source>
</evidence>
<evidence type="ECO:0000269" key="3">
    <source>
    </source>
</evidence>
<evidence type="ECO:0000269" key="4">
    <source>
    </source>
</evidence>
<evidence type="ECO:0000303" key="5">
    <source>
    </source>
</evidence>
<evidence type="ECO:0000305" key="6"/>
<evidence type="ECO:0000305" key="7">
    <source>
    </source>
</evidence>
<evidence type="ECO:0000312" key="8">
    <source>
        <dbReference type="EMBL" id="AAL28421.1"/>
    </source>
</evidence>
<sequence>MKKVLVTGGTGLVGKALEAVIKEQSPEDEQWFFAGSKDADLTNLAATQALFAREKPTHVIHLAAMVGGLFHNMNNNLDFLRNNLLINDNVLQTAHEQGCVKVVSCLSTCIFPDKTSYPIDETMVHNGPPHPSNYGYSYAKRLIDVQNHAYHDKYGRVYTSVIPCNIFGPHDNYNPEVSHVIPGMIYRMHQLVTEKTDVPENDKVFTVFGSGMPLRQFVYSRDLAELMIWVLRNYESVEPIILSADEVQEVTIFEVAQAVAKAFNFNGRLVCDTSKSDGQYKKTASNAKLRSFLPDYAFTDLETAINASVKWYIENYDQARK</sequence>
<protein>
    <recommendedName>
        <fullName>Probable GDP-L-fucose synthase</fullName>
        <ecNumber evidence="7">1.1.1.271</ecNumber>
    </recommendedName>
    <alternativeName>
        <fullName evidence="5">GDP-4-keto-6-deoxy-D-mannose-3,5-epimerase-4-reductase</fullName>
        <shortName evidence="5">GER</shortName>
    </alternativeName>
    <alternativeName>
        <fullName>Protein FX</fullName>
    </alternativeName>
</protein>
<comment type="function">
    <text evidence="7">Catalyzes the two-step NADP-dependent conversion of GDP-4-dehydro-6-deoxy-D-mannose to GDP-fucose, involving an epimerase and a reductase reaction.</text>
</comment>
<comment type="catalytic activity">
    <reaction evidence="7">
        <text>GDP-beta-L-fucose + NADP(+) = GDP-4-dehydro-alpha-D-rhamnose + NADPH + H(+)</text>
        <dbReference type="Rhea" id="RHEA:18885"/>
        <dbReference type="ChEBI" id="CHEBI:15378"/>
        <dbReference type="ChEBI" id="CHEBI:57273"/>
        <dbReference type="ChEBI" id="CHEBI:57783"/>
        <dbReference type="ChEBI" id="CHEBI:57964"/>
        <dbReference type="ChEBI" id="CHEBI:58349"/>
        <dbReference type="EC" id="1.1.1.271"/>
    </reaction>
    <physiologicalReaction direction="right-to-left" evidence="7">
        <dbReference type="Rhea" id="RHEA:18887"/>
    </physiologicalReaction>
</comment>
<comment type="pathway">
    <text>Nucleotide-sugar biosynthesis; GDP-L-fucose biosynthesis via de novo pathway; GDP-L-fucose from GDP-alpha-D-mannose: step 2/2.</text>
</comment>
<comment type="subunit">
    <text evidence="2">Homodimer.</text>
</comment>
<comment type="similarity">
    <text evidence="6">Belongs to the NAD(P)-dependent epimerase/dehydratase family. Fucose synthase subfamily.</text>
</comment>
<dbReference type="EC" id="1.1.1.271" evidence="7"/>
<dbReference type="EMBL" id="AM231688">
    <property type="protein sequence ID" value="CAJ77751.1"/>
    <property type="molecule type" value="mRNA"/>
</dbReference>
<dbReference type="EMBL" id="AE013599">
    <property type="protein sequence ID" value="AAF46924.1"/>
    <property type="molecule type" value="Genomic_DNA"/>
</dbReference>
<dbReference type="EMBL" id="AY060873">
    <property type="protein sequence ID" value="AAL28421.1"/>
    <property type="molecule type" value="mRNA"/>
</dbReference>
<dbReference type="EMBL" id="AY119148">
    <property type="protein sequence ID" value="AAM51008.1"/>
    <property type="molecule type" value="mRNA"/>
</dbReference>
<dbReference type="RefSeq" id="NP_611734.1">
    <property type="nucleotide sequence ID" value="NM_137890.3"/>
</dbReference>
<dbReference type="SMR" id="Q9W1X8"/>
<dbReference type="BioGRID" id="63249">
    <property type="interactions" value="1"/>
</dbReference>
<dbReference type="FunCoup" id="Q9W1X8">
    <property type="interactions" value="316"/>
</dbReference>
<dbReference type="STRING" id="7227.FBpp0071816"/>
<dbReference type="PaxDb" id="7227-FBpp0071816"/>
<dbReference type="DNASU" id="37638"/>
<dbReference type="EnsemblMetazoa" id="FBtr0071905">
    <property type="protein sequence ID" value="FBpp0071816"/>
    <property type="gene ID" value="FBgn0267823"/>
</dbReference>
<dbReference type="GeneID" id="37638"/>
<dbReference type="KEGG" id="dme:Dmel_CG3495"/>
<dbReference type="AGR" id="FB:FBgn0267823"/>
<dbReference type="CTD" id="37638"/>
<dbReference type="FlyBase" id="FBgn0267823">
    <property type="gene designation" value="Gmer"/>
</dbReference>
<dbReference type="VEuPathDB" id="VectorBase:FBgn0267823"/>
<dbReference type="eggNOG" id="KOG1431">
    <property type="taxonomic scope" value="Eukaryota"/>
</dbReference>
<dbReference type="GeneTree" id="ENSGT00390000004681"/>
<dbReference type="HOGENOM" id="CLU_007383_18_2_1"/>
<dbReference type="InParanoid" id="Q9W1X8"/>
<dbReference type="OMA" id="HPSNYGY"/>
<dbReference type="OrthoDB" id="202470at2759"/>
<dbReference type="PhylomeDB" id="Q9W1X8"/>
<dbReference type="BRENDA" id="1.1.1.271">
    <property type="organism ID" value="1994"/>
</dbReference>
<dbReference type="Reactome" id="R-DME-6787639">
    <property type="pathway name" value="GDP-fucose biosynthesis"/>
</dbReference>
<dbReference type="UniPathway" id="UPA00128">
    <property type="reaction ID" value="UER00191"/>
</dbReference>
<dbReference type="BioGRID-ORCS" id="37638">
    <property type="hits" value="0 hits in 1 CRISPR screen"/>
</dbReference>
<dbReference type="GenomeRNAi" id="37638"/>
<dbReference type="PRO" id="PR:Q9W1X8"/>
<dbReference type="Proteomes" id="UP000000803">
    <property type="component" value="Chromosome 2R"/>
</dbReference>
<dbReference type="Bgee" id="FBgn0267823">
    <property type="expression patterns" value="Expressed in oviduct (Drosophila) and 57 other cell types or tissues"/>
</dbReference>
<dbReference type="ExpressionAtlas" id="Q9W1X8">
    <property type="expression patterns" value="baseline and differential"/>
</dbReference>
<dbReference type="GO" id="GO:0005829">
    <property type="term" value="C:cytosol"/>
    <property type="evidence" value="ECO:0000250"/>
    <property type="project" value="FlyBase"/>
</dbReference>
<dbReference type="GO" id="GO:0050577">
    <property type="term" value="F:GDP-L-fucose synthase activity"/>
    <property type="evidence" value="ECO:0000314"/>
    <property type="project" value="FlyBase"/>
</dbReference>
<dbReference type="GO" id="GO:0047918">
    <property type="term" value="F:GDP-mannose 3,5-epimerase activity"/>
    <property type="evidence" value="ECO:0000250"/>
    <property type="project" value="FlyBase"/>
</dbReference>
<dbReference type="GO" id="GO:0042351">
    <property type="term" value="P:'de novo' GDP-L-fucose biosynthetic process"/>
    <property type="evidence" value="ECO:0000314"/>
    <property type="project" value="FlyBase"/>
</dbReference>
<dbReference type="CDD" id="cd05239">
    <property type="entry name" value="GDP_FS_SDR_e"/>
    <property type="match status" value="1"/>
</dbReference>
<dbReference type="Gene3D" id="3.40.50.720">
    <property type="entry name" value="NAD(P)-binding Rossmann-like Domain"/>
    <property type="match status" value="1"/>
</dbReference>
<dbReference type="Gene3D" id="3.90.25.10">
    <property type="entry name" value="UDP-galactose 4-epimerase, domain 1"/>
    <property type="match status" value="1"/>
</dbReference>
<dbReference type="HAMAP" id="MF_00956">
    <property type="entry name" value="GDP_fucose_synth"/>
    <property type="match status" value="1"/>
</dbReference>
<dbReference type="InterPro" id="IPR001509">
    <property type="entry name" value="Epimerase_deHydtase"/>
</dbReference>
<dbReference type="InterPro" id="IPR028614">
    <property type="entry name" value="GDP_fucose/colitose_synth"/>
</dbReference>
<dbReference type="InterPro" id="IPR036291">
    <property type="entry name" value="NAD(P)-bd_dom_sf"/>
</dbReference>
<dbReference type="PANTHER" id="PTHR43238">
    <property type="entry name" value="GDP-L-FUCOSE SYNTHASE"/>
    <property type="match status" value="1"/>
</dbReference>
<dbReference type="PANTHER" id="PTHR43238:SF1">
    <property type="entry name" value="GDP-L-FUCOSE SYNTHASE"/>
    <property type="match status" value="1"/>
</dbReference>
<dbReference type="Pfam" id="PF01370">
    <property type="entry name" value="Epimerase"/>
    <property type="match status" value="1"/>
</dbReference>
<dbReference type="SUPFAM" id="SSF51735">
    <property type="entry name" value="NAD(P)-binding Rossmann-fold domains"/>
    <property type="match status" value="1"/>
</dbReference>
<proteinExistence type="evidence at protein level"/>
<feature type="chain" id="PRO_0000174353" description="Probable GDP-L-fucose synthase">
    <location>
        <begin position="1"/>
        <end position="321"/>
    </location>
</feature>
<feature type="active site" description="Proton donor/acceptor" evidence="1">
    <location>
        <position position="136"/>
    </location>
</feature>
<feature type="binding site" evidence="1">
    <location>
        <begin position="8"/>
        <end position="14"/>
    </location>
    <ligand>
        <name>NADP(+)</name>
        <dbReference type="ChEBI" id="CHEBI:58349"/>
    </ligand>
</feature>
<feature type="binding site" evidence="1">
    <location>
        <position position="140"/>
    </location>
    <ligand>
        <name>NADP(+)</name>
        <dbReference type="ChEBI" id="CHEBI:58349"/>
    </ligand>
</feature>
<feature type="binding site" evidence="1">
    <location>
        <begin position="163"/>
        <end position="166"/>
    </location>
    <ligand>
        <name>NADP(+)</name>
        <dbReference type="ChEBI" id="CHEBI:58349"/>
    </ligand>
</feature>
<feature type="binding site" evidence="1">
    <location>
        <position position="179"/>
    </location>
    <ligand>
        <name>NADP(+)</name>
        <dbReference type="ChEBI" id="CHEBI:58349"/>
    </ligand>
</feature>
<feature type="binding site" evidence="1">
    <location>
        <position position="187"/>
    </location>
    <ligand>
        <name>substrate</name>
    </ligand>
</feature>
<feature type="binding site" evidence="1">
    <location>
        <position position="215"/>
    </location>
    <ligand>
        <name>substrate</name>
    </ligand>
</feature>
<feature type="binding site" evidence="1">
    <location>
        <position position="277"/>
    </location>
    <ligand>
        <name>substrate</name>
    </ligand>
</feature>
<feature type="site" description="Important for catalytic activity" evidence="1">
    <location>
        <position position="107"/>
    </location>
</feature>
<feature type="site" description="Important for catalytic activity" evidence="1">
    <location>
        <position position="109"/>
    </location>
</feature>
<feature type="site" description="Lowers pKa of active site Tyr" evidence="1">
    <location>
        <position position="140"/>
    </location>
</feature>
<feature type="sequence conflict" description="In Ref. 4; AAM51008." evidence="6" ref="4">
    <original>P</original>
    <variation>R</variation>
    <location>
        <position position="112"/>
    </location>
</feature>